<organism>
    <name type="scientific">Afipia carboxidovorans (strain ATCC 49405 / DSM 1227 / KCTC 32145 / OM5)</name>
    <name type="common">Oligotropha carboxidovorans</name>
    <dbReference type="NCBI Taxonomy" id="504832"/>
    <lineage>
        <taxon>Bacteria</taxon>
        <taxon>Pseudomonadati</taxon>
        <taxon>Pseudomonadota</taxon>
        <taxon>Alphaproteobacteria</taxon>
        <taxon>Hyphomicrobiales</taxon>
        <taxon>Nitrobacteraceae</taxon>
        <taxon>Afipia</taxon>
    </lineage>
</organism>
<evidence type="ECO:0000255" key="1">
    <source>
        <dbReference type="HAMAP-Rule" id="MF_00222"/>
    </source>
</evidence>
<protein>
    <recommendedName>
        <fullName evidence="1">Shikimate dehydrogenase (NADP(+))</fullName>
        <shortName evidence="1">SDH</shortName>
        <ecNumber evidence="1">1.1.1.25</ecNumber>
    </recommendedName>
</protein>
<keyword id="KW-0028">Amino-acid biosynthesis</keyword>
<keyword id="KW-0057">Aromatic amino acid biosynthesis</keyword>
<keyword id="KW-0521">NADP</keyword>
<keyword id="KW-0560">Oxidoreductase</keyword>
<keyword id="KW-1185">Reference proteome</keyword>
<gene>
    <name evidence="1" type="primary">aroE</name>
    <name type="ordered locus">OCAR_7169</name>
    <name type="ordered locus">OCA5_c09400</name>
</gene>
<feature type="chain" id="PRO_1000100127" description="Shikimate dehydrogenase (NADP(+))">
    <location>
        <begin position="1"/>
        <end position="277"/>
    </location>
</feature>
<feature type="active site" description="Proton acceptor" evidence="1">
    <location>
        <position position="68"/>
    </location>
</feature>
<feature type="binding site" evidence="1">
    <location>
        <begin position="17"/>
        <end position="19"/>
    </location>
    <ligand>
        <name>shikimate</name>
        <dbReference type="ChEBI" id="CHEBI:36208"/>
    </ligand>
</feature>
<feature type="binding site" evidence="1">
    <location>
        <position position="64"/>
    </location>
    <ligand>
        <name>shikimate</name>
        <dbReference type="ChEBI" id="CHEBI:36208"/>
    </ligand>
</feature>
<feature type="binding site" evidence="1">
    <location>
        <position position="88"/>
    </location>
    <ligand>
        <name>shikimate</name>
        <dbReference type="ChEBI" id="CHEBI:36208"/>
    </ligand>
</feature>
<feature type="binding site" evidence="1">
    <location>
        <position position="103"/>
    </location>
    <ligand>
        <name>shikimate</name>
        <dbReference type="ChEBI" id="CHEBI:36208"/>
    </ligand>
</feature>
<feature type="binding site" evidence="1">
    <location>
        <begin position="128"/>
        <end position="132"/>
    </location>
    <ligand>
        <name>NADP(+)</name>
        <dbReference type="ChEBI" id="CHEBI:58349"/>
    </ligand>
</feature>
<feature type="binding site" evidence="1">
    <location>
        <position position="217"/>
    </location>
    <ligand>
        <name>NADP(+)</name>
        <dbReference type="ChEBI" id="CHEBI:58349"/>
    </ligand>
</feature>
<feature type="binding site" evidence="1">
    <location>
        <position position="219"/>
    </location>
    <ligand>
        <name>shikimate</name>
        <dbReference type="ChEBI" id="CHEBI:36208"/>
    </ligand>
</feature>
<feature type="binding site" evidence="1">
    <location>
        <position position="240"/>
    </location>
    <ligand>
        <name>NADP(+)</name>
        <dbReference type="ChEBI" id="CHEBI:58349"/>
    </ligand>
</feature>
<sequence>MSETPTACLIGWPAAHSRSPIIHKYWLKELGIAGDYRIEAVEPAAFPDFIASLAARGYCGANVTIPHKEKALALSLPDARARAVGAANTLYFRDDKLHSTNTDVEGFIGNLDASAQRWRADDDAVVLGAGGSARAVVFGLIERGVPRIHLVNRSRERAQALAQPYGERVSVASWDDVESLLPKAGLVVNTTSLGMKGQPPLPLDVALLRADATVADLVYVPLRTELLTAAAGRGLQTADGLGMLLHQAVRGFELWFGRRPQVSPALRALVEADLTVK</sequence>
<dbReference type="EC" id="1.1.1.25" evidence="1"/>
<dbReference type="EMBL" id="CP001196">
    <property type="protein sequence ID" value="ACI94273.1"/>
    <property type="molecule type" value="Genomic_DNA"/>
</dbReference>
<dbReference type="EMBL" id="CP002826">
    <property type="protein sequence ID" value="AEI05662.1"/>
    <property type="molecule type" value="Genomic_DNA"/>
</dbReference>
<dbReference type="RefSeq" id="WP_012564299.1">
    <property type="nucleotide sequence ID" value="NC_015684.1"/>
</dbReference>
<dbReference type="SMR" id="B6JIM2"/>
<dbReference type="STRING" id="504832.OCA5_c09400"/>
<dbReference type="KEGG" id="oca:OCAR_7169"/>
<dbReference type="KEGG" id="ocg:OCA5_c09400"/>
<dbReference type="PATRIC" id="fig|504832.7.peg.994"/>
<dbReference type="eggNOG" id="COG0169">
    <property type="taxonomic scope" value="Bacteria"/>
</dbReference>
<dbReference type="HOGENOM" id="CLU_044063_2_0_5"/>
<dbReference type="OrthoDB" id="9792692at2"/>
<dbReference type="UniPathway" id="UPA00053">
    <property type="reaction ID" value="UER00087"/>
</dbReference>
<dbReference type="Proteomes" id="UP000007730">
    <property type="component" value="Chromosome"/>
</dbReference>
<dbReference type="GO" id="GO:0005829">
    <property type="term" value="C:cytosol"/>
    <property type="evidence" value="ECO:0007669"/>
    <property type="project" value="TreeGrafter"/>
</dbReference>
<dbReference type="GO" id="GO:0050661">
    <property type="term" value="F:NADP binding"/>
    <property type="evidence" value="ECO:0007669"/>
    <property type="project" value="InterPro"/>
</dbReference>
<dbReference type="GO" id="GO:0004764">
    <property type="term" value="F:shikimate 3-dehydrogenase (NADP+) activity"/>
    <property type="evidence" value="ECO:0007669"/>
    <property type="project" value="UniProtKB-UniRule"/>
</dbReference>
<dbReference type="GO" id="GO:0008652">
    <property type="term" value="P:amino acid biosynthetic process"/>
    <property type="evidence" value="ECO:0007669"/>
    <property type="project" value="UniProtKB-KW"/>
</dbReference>
<dbReference type="GO" id="GO:0009073">
    <property type="term" value="P:aromatic amino acid family biosynthetic process"/>
    <property type="evidence" value="ECO:0007669"/>
    <property type="project" value="UniProtKB-KW"/>
</dbReference>
<dbReference type="GO" id="GO:0009423">
    <property type="term" value="P:chorismate biosynthetic process"/>
    <property type="evidence" value="ECO:0007669"/>
    <property type="project" value="UniProtKB-UniRule"/>
</dbReference>
<dbReference type="GO" id="GO:0019632">
    <property type="term" value="P:shikimate metabolic process"/>
    <property type="evidence" value="ECO:0007669"/>
    <property type="project" value="InterPro"/>
</dbReference>
<dbReference type="CDD" id="cd01065">
    <property type="entry name" value="NAD_bind_Shikimate_DH"/>
    <property type="match status" value="1"/>
</dbReference>
<dbReference type="Gene3D" id="3.40.50.10860">
    <property type="entry name" value="Leucine Dehydrogenase, chain A, domain 1"/>
    <property type="match status" value="1"/>
</dbReference>
<dbReference type="Gene3D" id="3.40.50.720">
    <property type="entry name" value="NAD(P)-binding Rossmann-like Domain"/>
    <property type="match status" value="1"/>
</dbReference>
<dbReference type="HAMAP" id="MF_00222">
    <property type="entry name" value="Shikimate_DH_AroE"/>
    <property type="match status" value="1"/>
</dbReference>
<dbReference type="InterPro" id="IPR046346">
    <property type="entry name" value="Aminoacid_DH-like_N_sf"/>
</dbReference>
<dbReference type="InterPro" id="IPR036291">
    <property type="entry name" value="NAD(P)-bd_dom_sf"/>
</dbReference>
<dbReference type="InterPro" id="IPR041121">
    <property type="entry name" value="SDH_C"/>
</dbReference>
<dbReference type="InterPro" id="IPR011342">
    <property type="entry name" value="Shikimate_DH"/>
</dbReference>
<dbReference type="InterPro" id="IPR013708">
    <property type="entry name" value="Shikimate_DH-bd_N"/>
</dbReference>
<dbReference type="InterPro" id="IPR022893">
    <property type="entry name" value="Shikimate_DH_fam"/>
</dbReference>
<dbReference type="InterPro" id="IPR006151">
    <property type="entry name" value="Shikm_DH/Glu-tRNA_Rdtase"/>
</dbReference>
<dbReference type="NCBIfam" id="TIGR00507">
    <property type="entry name" value="aroE"/>
    <property type="match status" value="1"/>
</dbReference>
<dbReference type="NCBIfam" id="NF001312">
    <property type="entry name" value="PRK00258.1-4"/>
    <property type="match status" value="1"/>
</dbReference>
<dbReference type="PANTHER" id="PTHR21089:SF1">
    <property type="entry name" value="BIFUNCTIONAL 3-DEHYDROQUINATE DEHYDRATASE_SHIKIMATE DEHYDROGENASE, CHLOROPLASTIC"/>
    <property type="match status" value="1"/>
</dbReference>
<dbReference type="PANTHER" id="PTHR21089">
    <property type="entry name" value="SHIKIMATE DEHYDROGENASE"/>
    <property type="match status" value="1"/>
</dbReference>
<dbReference type="Pfam" id="PF18317">
    <property type="entry name" value="SDH_C"/>
    <property type="match status" value="1"/>
</dbReference>
<dbReference type="Pfam" id="PF01488">
    <property type="entry name" value="Shikimate_DH"/>
    <property type="match status" value="1"/>
</dbReference>
<dbReference type="Pfam" id="PF08501">
    <property type="entry name" value="Shikimate_dh_N"/>
    <property type="match status" value="1"/>
</dbReference>
<dbReference type="SUPFAM" id="SSF53223">
    <property type="entry name" value="Aminoacid dehydrogenase-like, N-terminal domain"/>
    <property type="match status" value="1"/>
</dbReference>
<dbReference type="SUPFAM" id="SSF51735">
    <property type="entry name" value="NAD(P)-binding Rossmann-fold domains"/>
    <property type="match status" value="1"/>
</dbReference>
<name>AROE_AFIC5</name>
<reference key="1">
    <citation type="journal article" date="2008" name="J. Bacteriol.">
        <title>Genome sequence of the chemolithoautotrophic bacterium Oligotropha carboxidovorans OM5T.</title>
        <authorList>
            <person name="Paul D."/>
            <person name="Bridges S."/>
            <person name="Burgess S.C."/>
            <person name="Dandass Y."/>
            <person name="Lawrence M.L."/>
        </authorList>
    </citation>
    <scope>NUCLEOTIDE SEQUENCE [LARGE SCALE GENOMIC DNA]</scope>
    <source>
        <strain>ATCC 49405 / DSM 1227 / KCTC 32145 / OM5</strain>
    </source>
</reference>
<reference key="2">
    <citation type="journal article" date="2011" name="J. Bacteriol.">
        <title>Complete genome sequences of the chemolithoautotrophic Oligotropha carboxidovorans strains OM4 and OM5.</title>
        <authorList>
            <person name="Volland S."/>
            <person name="Rachinger M."/>
            <person name="Strittmatter A."/>
            <person name="Daniel R."/>
            <person name="Gottschalk G."/>
            <person name="Meyer O."/>
        </authorList>
    </citation>
    <scope>NUCLEOTIDE SEQUENCE [LARGE SCALE GENOMIC DNA]</scope>
    <source>
        <strain>ATCC 49405 / DSM 1227 / KCTC 32145 / OM5</strain>
    </source>
</reference>
<accession>B6JIM2</accession>
<accession>F8BRI9</accession>
<proteinExistence type="inferred from homology"/>
<comment type="function">
    <text evidence="1">Involved in the biosynthesis of the chorismate, which leads to the biosynthesis of aromatic amino acids. Catalyzes the reversible NADPH linked reduction of 3-dehydroshikimate (DHSA) to yield shikimate (SA).</text>
</comment>
<comment type="catalytic activity">
    <reaction evidence="1">
        <text>shikimate + NADP(+) = 3-dehydroshikimate + NADPH + H(+)</text>
        <dbReference type="Rhea" id="RHEA:17737"/>
        <dbReference type="ChEBI" id="CHEBI:15378"/>
        <dbReference type="ChEBI" id="CHEBI:16630"/>
        <dbReference type="ChEBI" id="CHEBI:36208"/>
        <dbReference type="ChEBI" id="CHEBI:57783"/>
        <dbReference type="ChEBI" id="CHEBI:58349"/>
        <dbReference type="EC" id="1.1.1.25"/>
    </reaction>
</comment>
<comment type="pathway">
    <text evidence="1">Metabolic intermediate biosynthesis; chorismate biosynthesis; chorismate from D-erythrose 4-phosphate and phosphoenolpyruvate: step 4/7.</text>
</comment>
<comment type="subunit">
    <text evidence="1">Homodimer.</text>
</comment>
<comment type="similarity">
    <text evidence="1">Belongs to the shikimate dehydrogenase family.</text>
</comment>